<evidence type="ECO:0000250" key="1"/>
<evidence type="ECO:0000269" key="2">
    <source ref="1"/>
</evidence>
<evidence type="ECO:0000305" key="3"/>
<organism>
    <name type="scientific">Hordeum vulgare</name>
    <name type="common">Barley</name>
    <dbReference type="NCBI Taxonomy" id="4513"/>
    <lineage>
        <taxon>Eukaryota</taxon>
        <taxon>Viridiplantae</taxon>
        <taxon>Streptophyta</taxon>
        <taxon>Embryophyta</taxon>
        <taxon>Tracheophyta</taxon>
        <taxon>Spermatophyta</taxon>
        <taxon>Magnoliopsida</taxon>
        <taxon>Liliopsida</taxon>
        <taxon>Poales</taxon>
        <taxon>Poaceae</taxon>
        <taxon>BOP clade</taxon>
        <taxon>Pooideae</taxon>
        <taxon>Triticodae</taxon>
        <taxon>Triticeae</taxon>
        <taxon>Hordeinae</taxon>
        <taxon>Hordeum</taxon>
    </lineage>
</organism>
<proteinExistence type="evidence at protein level"/>
<protein>
    <recommendedName>
        <fullName>Protein synthesis inhibitor II</fullName>
        <ecNumber>3.2.2.22</ecNumber>
    </recommendedName>
    <alternativeName>
        <fullName>Ribosome-inactivating protein II</fullName>
    </alternativeName>
    <alternativeName>
        <fullName>rRNA N-glycosidase</fullName>
    </alternativeName>
</protein>
<accession>P04399</accession>
<dbReference type="EC" id="3.2.2.22"/>
<dbReference type="EMBL" id="M62906">
    <property type="protein sequence ID" value="AAA32951.1"/>
    <property type="molecule type" value="mRNA"/>
</dbReference>
<dbReference type="PIR" id="A03373">
    <property type="entry name" value="RLBH"/>
</dbReference>
<dbReference type="SMR" id="P04399"/>
<dbReference type="BRENDA" id="3.2.2.22">
    <property type="organism ID" value="2687"/>
</dbReference>
<dbReference type="ExpressionAtlas" id="P04399">
    <property type="expression patterns" value="baseline"/>
</dbReference>
<dbReference type="GO" id="GO:0005737">
    <property type="term" value="C:cytoplasm"/>
    <property type="evidence" value="ECO:0007669"/>
    <property type="project" value="UniProtKB-SubCell"/>
</dbReference>
<dbReference type="GO" id="GO:0030598">
    <property type="term" value="F:rRNA N-glycosylase activity"/>
    <property type="evidence" value="ECO:0007669"/>
    <property type="project" value="UniProtKB-EC"/>
</dbReference>
<dbReference type="GO" id="GO:0090729">
    <property type="term" value="F:toxin activity"/>
    <property type="evidence" value="ECO:0007669"/>
    <property type="project" value="UniProtKB-KW"/>
</dbReference>
<dbReference type="GO" id="GO:0050832">
    <property type="term" value="P:defense response to fungus"/>
    <property type="evidence" value="ECO:0007669"/>
    <property type="project" value="UniProtKB-KW"/>
</dbReference>
<dbReference type="GO" id="GO:0031640">
    <property type="term" value="P:killing of cells of another organism"/>
    <property type="evidence" value="ECO:0007669"/>
    <property type="project" value="UniProtKB-KW"/>
</dbReference>
<dbReference type="GO" id="GO:0017148">
    <property type="term" value="P:negative regulation of translation"/>
    <property type="evidence" value="ECO:0007669"/>
    <property type="project" value="UniProtKB-KW"/>
</dbReference>
<dbReference type="Gene3D" id="3.40.420.10">
    <property type="entry name" value="Ricin (A subunit), domain 1"/>
    <property type="match status" value="1"/>
</dbReference>
<dbReference type="Gene3D" id="4.10.470.10">
    <property type="entry name" value="Ricin (A Subunit), domain 2"/>
    <property type="match status" value="1"/>
</dbReference>
<dbReference type="InterPro" id="IPR036041">
    <property type="entry name" value="Ribosome-inact_prot_sf"/>
</dbReference>
<dbReference type="InterPro" id="IPR017989">
    <property type="entry name" value="Ribosome_inactivat_1/2"/>
</dbReference>
<dbReference type="InterPro" id="IPR001574">
    <property type="entry name" value="Ribosome_inactivat_prot"/>
</dbReference>
<dbReference type="InterPro" id="IPR017988">
    <property type="entry name" value="Ribosome_inactivat_prot_CS"/>
</dbReference>
<dbReference type="InterPro" id="IPR016138">
    <property type="entry name" value="Ribosome_inactivat_prot_sub1"/>
</dbReference>
<dbReference type="InterPro" id="IPR016139">
    <property type="entry name" value="Ribosome_inactivat_prot_sub2"/>
</dbReference>
<dbReference type="PANTHER" id="PTHR33453">
    <property type="match status" value="1"/>
</dbReference>
<dbReference type="PANTHER" id="PTHR33453:SF27">
    <property type="entry name" value="RRNA N-GLYCOSYLASE"/>
    <property type="match status" value="1"/>
</dbReference>
<dbReference type="Pfam" id="PF00161">
    <property type="entry name" value="RIP"/>
    <property type="match status" value="1"/>
</dbReference>
<dbReference type="PRINTS" id="PR00396">
    <property type="entry name" value="SHIGARICIN"/>
</dbReference>
<dbReference type="SUPFAM" id="SSF56371">
    <property type="entry name" value="Ribosome inactivating proteins (RIP)"/>
    <property type="match status" value="1"/>
</dbReference>
<dbReference type="PROSITE" id="PS00275">
    <property type="entry name" value="SHIGA_RICIN"/>
    <property type="match status" value="1"/>
</dbReference>
<keyword id="KW-0007">Acetylation</keyword>
<keyword id="KW-0929">Antimicrobial</keyword>
<keyword id="KW-0963">Cytoplasm</keyword>
<keyword id="KW-0903">Direct protein sequencing</keyword>
<keyword id="KW-0295">Fungicide</keyword>
<keyword id="KW-0378">Hydrolase</keyword>
<keyword id="KW-0611">Plant defense</keyword>
<keyword id="KW-0652">Protein synthesis inhibitor</keyword>
<keyword id="KW-0800">Toxin</keyword>
<name>RIP2_HORVU</name>
<reference key="1">
    <citation type="journal article" date="1986" name="Carlsberg Res. Commun.">
        <title>The complete primary structure of protein synthesis inhibitor II from barley seeds.</title>
        <authorList>
            <person name="Asano K."/>
            <person name="Svensson B."/>
            <person name="Svendsen I."/>
            <person name="Poulsen F.M."/>
            <person name="Roepstorff P."/>
        </authorList>
    </citation>
    <scope>PROTEIN SEQUENCE</scope>
    <scope>ACETYLATION AT ALA-1</scope>
</reference>
<reference key="2">
    <citation type="journal article" date="1991" name="J. Biol. Chem.">
        <title>Biochemical and molecular characterization of three barley seed proteins with antifungal properties.</title>
        <authorList>
            <person name="Leah R."/>
            <person name="Tommerup H."/>
            <person name="Svendsen I."/>
            <person name="Mundy J."/>
        </authorList>
    </citation>
    <scope>NUCLEOTIDE SEQUENCE [MRNA] OF 164-280</scope>
    <source>
        <strain>cv. Piggy</strain>
    </source>
</reference>
<reference key="3">
    <citation type="journal article" date="1986" name="Biochim. Biophys. Acta">
        <title>Isolation and partial characterization of two antifungal proteins from barley.</title>
        <authorList>
            <person name="Roberts W.K."/>
            <person name="Selitrennikoff C.P."/>
        </authorList>
    </citation>
    <scope>ANTIFUNGAL ACTIVITY</scope>
</reference>
<gene>
    <name type="primary">RIP30A</name>
</gene>
<feature type="chain" id="PRO_0000221402" description="Protein synthesis inhibitor II">
    <location>
        <begin position="1"/>
        <end position="280"/>
    </location>
</feature>
<feature type="active site" evidence="1">
    <location>
        <position position="174"/>
    </location>
</feature>
<feature type="modified residue" description="N-acetylalanine" evidence="2">
    <location>
        <position position="1"/>
    </location>
</feature>
<sequence>AAKMAKNVDKPLFTATFNVQASSADYATFIAGIRNKLRNPAHFSHNEPVLPPVEPNVPPSRWFHVVLKASPTSAGLTLAIRADNIYLEGFKSSDGTWWELTPGLIPGATYVGFGGTYRDLLGDTDKLTNVALGRQQLEDAVTALHGRTKADKASGPKQQQAREAVTTLLLMVNEATRFQTVSGFVAGLLHPKAVEKKSGKIGNEMKAQVNGWQDLSAALLKTDVKPPPGKSPAKFTPIEKMGVRTAEQAAATLGILLFVEVPGGLTVAKALELFHASGGK</sequence>
<comment type="function">
    <text>Inhibits the elongation phase of protein synthesis. It inactivates fungal ribosomes even more effectively than mammalian ribosomes and is thought to function as a constitutive antifungal agent in plants.</text>
</comment>
<comment type="catalytic activity">
    <reaction>
        <text>Endohydrolysis of the N-glycosidic bond at one specific adenosine on the 28S rRNA.</text>
        <dbReference type="EC" id="3.2.2.22"/>
    </reaction>
</comment>
<comment type="subcellular location">
    <subcellularLocation>
        <location>Cytoplasm</location>
    </subcellularLocation>
    <text>Starchy endosperm of mature seeds.</text>
</comment>
<comment type="miscellaneous">
    <text>Three similar RIP 30 isoforms I, II, and III have been described in Barley.</text>
</comment>
<comment type="similarity">
    <text evidence="3">Belongs to the ribosome-inactivating protein family. Type 1 RIP subfamily.</text>
</comment>